<evidence type="ECO:0000255" key="1">
    <source>
        <dbReference type="HAMAP-Rule" id="MF_03027"/>
    </source>
</evidence>
<evidence type="ECO:0000256" key="2">
    <source>
        <dbReference type="SAM" id="MobiDB-lite"/>
    </source>
</evidence>
<evidence type="ECO:0000305" key="3"/>
<sequence length="751" mass="85440">MALTDSKKKATSKRKRDEPEQEQTHTLTSQLEMLTDEEGDDDNAGDVSDDGEYDEFPEIDAESDSEEEDEEEDEEDEEDEPDISDEEDSDSDESLHVFPKAKTVVSDITGQQKRVYPEIEPDYDSDSSTEDSPNRVGNVPMHWYDDLPHIGYDINGKRVLRPAKGDELDKFLATIEDPDSWTSAFDKKMQMDKPLTSEELDIIQRLYAGENPDATYDPYEPMVEWFTGKGKEEIMPLSAAPEPKRRWVRSKWEKQKIMKIVRAIRQGRIVPNKPKTSSKQFEFYSIWSSEPSSSQPPPLPAPKRPLPTNAESYNPPEEYLPTEEEKQEWLKQDPEDRERDFLPQKFSSLRHVPAYDQFIKERFNRQLDLYLAPRIQRVKLNIDPNSLIPKLPSPSSLKPFPNYRSLLFTHPKGRARCVSVSPDGAWAVSGDEDGVVSLWEVNVGCEIRRWKFEGKIGSLEWCPRADACYFAVGIEETIHFLIPPNLDPTVLALTQTLLAPSTLPPAPATPSAVKWSSSSLSSWSVEQPILSLNLPPSSGLPTQISWHKKGDYIATVSSGGAQNGVWIHQFTRRHSQAPFKKIKGAVQQVLFHPIKPHFFVATQQYVRLYNLAEQKLIKTLQPGIRWISSMDVHPSGDHVIVGGYDRKLCWFDLELSEKPYKVLRYHSRAIRSLHFHPTYPLFASSSDDGSIQIFHARVYNDLMTDPLIVPLKILRGHQITDGLGILQVKWTPKHPWLLSAAADGTVAVWCS</sequence>
<name>ERB1_COPC7</name>
<feature type="chain" id="PRO_0000370427" description="Ribosome biogenesis protein ERB1">
    <location>
        <begin position="1"/>
        <end position="751"/>
    </location>
</feature>
<feature type="repeat" description="WD 1">
    <location>
        <begin position="410"/>
        <end position="449"/>
    </location>
</feature>
<feature type="repeat" description="WD 2">
    <location>
        <begin position="536"/>
        <end position="580"/>
    </location>
</feature>
<feature type="repeat" description="WD 3">
    <location>
        <begin position="582"/>
        <end position="621"/>
    </location>
</feature>
<feature type="repeat" description="WD 4">
    <location>
        <begin position="622"/>
        <end position="661"/>
    </location>
</feature>
<feature type="repeat" description="WD 5">
    <location>
        <begin position="665"/>
        <end position="704"/>
    </location>
</feature>
<feature type="repeat" description="WD 6">
    <location>
        <begin position="720"/>
        <end position="751"/>
    </location>
</feature>
<feature type="region of interest" description="Disordered" evidence="2">
    <location>
        <begin position="1"/>
        <end position="140"/>
    </location>
</feature>
<feature type="region of interest" description="Disordered" evidence="2">
    <location>
        <begin position="289"/>
        <end position="336"/>
    </location>
</feature>
<feature type="compositionally biased region" description="Acidic residues" evidence="2">
    <location>
        <begin position="34"/>
        <end position="92"/>
    </location>
</feature>
<feature type="compositionally biased region" description="Acidic residues" evidence="2">
    <location>
        <begin position="119"/>
        <end position="129"/>
    </location>
</feature>
<feature type="compositionally biased region" description="Pro residues" evidence="2">
    <location>
        <begin position="294"/>
        <end position="305"/>
    </location>
</feature>
<feature type="compositionally biased region" description="Basic and acidic residues" evidence="2">
    <location>
        <begin position="323"/>
        <end position="336"/>
    </location>
</feature>
<organism>
    <name type="scientific">Coprinopsis cinerea (strain Okayama-7 / 130 / ATCC MYA-4618 / FGSC 9003)</name>
    <name type="common">Inky cap fungus</name>
    <name type="synonym">Hormographiella aspergillata</name>
    <dbReference type="NCBI Taxonomy" id="240176"/>
    <lineage>
        <taxon>Eukaryota</taxon>
        <taxon>Fungi</taxon>
        <taxon>Dikarya</taxon>
        <taxon>Basidiomycota</taxon>
        <taxon>Agaricomycotina</taxon>
        <taxon>Agaricomycetes</taxon>
        <taxon>Agaricomycetidae</taxon>
        <taxon>Agaricales</taxon>
        <taxon>Agaricineae</taxon>
        <taxon>Psathyrellaceae</taxon>
        <taxon>Coprinopsis</taxon>
    </lineage>
</organism>
<reference key="1">
    <citation type="journal article" date="2010" name="Proc. Natl. Acad. Sci. U.S.A.">
        <title>Insights into evolution of multicellular fungi from the assembled chromosomes of the mushroom Coprinopsis cinerea (Coprinus cinereus).</title>
        <authorList>
            <person name="Stajich J.E."/>
            <person name="Wilke S.K."/>
            <person name="Ahren D."/>
            <person name="Au C.H."/>
            <person name="Birren B.W."/>
            <person name="Borodovsky M."/>
            <person name="Burns C."/>
            <person name="Canbaeck B."/>
            <person name="Casselton L.A."/>
            <person name="Cheng C.K."/>
            <person name="Deng J."/>
            <person name="Dietrich F.S."/>
            <person name="Fargo D.C."/>
            <person name="Farman M.L."/>
            <person name="Gathman A.C."/>
            <person name="Goldberg J."/>
            <person name="Guigo R."/>
            <person name="Hoegger P.J."/>
            <person name="Hooker J.B."/>
            <person name="Huggins A."/>
            <person name="James T.Y."/>
            <person name="Kamada T."/>
            <person name="Kilaru S."/>
            <person name="Kodira C."/>
            <person name="Kuees U."/>
            <person name="Kupfer D."/>
            <person name="Kwan H.S."/>
            <person name="Lomsadze A."/>
            <person name="Li W."/>
            <person name="Lilly W.W."/>
            <person name="Ma L.-J."/>
            <person name="Mackey A.J."/>
            <person name="Manning G."/>
            <person name="Martin F."/>
            <person name="Muraguchi H."/>
            <person name="Natvig D.O."/>
            <person name="Palmerini H."/>
            <person name="Ramesh M.A."/>
            <person name="Rehmeyer C.J."/>
            <person name="Roe B.A."/>
            <person name="Shenoy N."/>
            <person name="Stanke M."/>
            <person name="Ter-Hovhannisyan V."/>
            <person name="Tunlid A."/>
            <person name="Velagapudi R."/>
            <person name="Vision T.J."/>
            <person name="Zeng Q."/>
            <person name="Zolan M.E."/>
            <person name="Pukkila P.J."/>
        </authorList>
    </citation>
    <scope>NUCLEOTIDE SEQUENCE [LARGE SCALE GENOMIC DNA]</scope>
    <source>
        <strain>Okayama-7 / 130 / ATCC MYA-4618 / FGSC 9003</strain>
    </source>
</reference>
<gene>
    <name evidence="1" type="primary">ERB1</name>
    <name type="ORF">CC1G_00099</name>
</gene>
<keyword id="KW-0539">Nucleus</keyword>
<keyword id="KW-1185">Reference proteome</keyword>
<keyword id="KW-0677">Repeat</keyword>
<keyword id="KW-0690">Ribosome biogenesis</keyword>
<keyword id="KW-0698">rRNA processing</keyword>
<keyword id="KW-0853">WD repeat</keyword>
<protein>
    <recommendedName>
        <fullName evidence="1">Ribosome biogenesis protein ERB1</fullName>
    </recommendedName>
    <alternativeName>
        <fullName evidence="1">Eukaryotic ribosome biogenesis protein 1</fullName>
    </alternativeName>
</protein>
<comment type="function">
    <text evidence="1">Component of the NOP7 complex, which is required for maturation of the 25S and 5.8S ribosomal RNAs and formation of the 60S ribosome.</text>
</comment>
<comment type="subunit">
    <text evidence="1">Component of the NOP7 complex, composed of ERB1, NOP7 and YTM1. The complex is held together by ERB1, which interacts with NOP7 via its N-terminal domain and with YTM1 via a high-affinity interaction between the seven-bladed beta-propeller domains of the 2 proteins. The NOP7 complex associates with the 66S pre-ribosome.</text>
</comment>
<comment type="subcellular location">
    <subcellularLocation>
        <location evidence="1">Nucleus</location>
        <location evidence="1">Nucleolus</location>
    </subcellularLocation>
    <subcellularLocation>
        <location evidence="1">Nucleus</location>
        <location evidence="1">Nucleoplasm</location>
    </subcellularLocation>
</comment>
<comment type="similarity">
    <text evidence="1">Belongs to the WD repeat BOP1/ERB1 family.</text>
</comment>
<comment type="sequence caution" evidence="3">
    <conflict type="erroneous gene model prediction">
        <sequence resource="EMBL-CDS" id="EAU84580"/>
    </conflict>
</comment>
<proteinExistence type="inferred from homology"/>
<accession>A8NWR2</accession>
<dbReference type="EMBL" id="AACS02000005">
    <property type="protein sequence ID" value="EAU84580.2"/>
    <property type="status" value="ALT_SEQ"/>
    <property type="molecule type" value="Genomic_DNA"/>
</dbReference>
<dbReference type="RefSeq" id="XP_001836963.2">
    <property type="nucleotide sequence ID" value="XM_001836911.2"/>
</dbReference>
<dbReference type="SMR" id="A8NWR2"/>
<dbReference type="FunCoup" id="A8NWR2">
    <property type="interactions" value="465"/>
</dbReference>
<dbReference type="STRING" id="240176.A8NWR2"/>
<dbReference type="GeneID" id="6013517"/>
<dbReference type="KEGG" id="cci:CC1G_00099"/>
<dbReference type="eggNOG" id="KOG0650">
    <property type="taxonomic scope" value="Eukaryota"/>
</dbReference>
<dbReference type="HOGENOM" id="CLU_011390_0_1_1"/>
<dbReference type="InParanoid" id="A8NWR2"/>
<dbReference type="OrthoDB" id="5571054at2759"/>
<dbReference type="Proteomes" id="UP000001861">
    <property type="component" value="Unassembled WGS sequence"/>
</dbReference>
<dbReference type="GO" id="GO:0005654">
    <property type="term" value="C:nucleoplasm"/>
    <property type="evidence" value="ECO:0007669"/>
    <property type="project" value="UniProtKB-SubCell"/>
</dbReference>
<dbReference type="GO" id="GO:0070545">
    <property type="term" value="C:PeBoW complex"/>
    <property type="evidence" value="ECO:0007669"/>
    <property type="project" value="TreeGrafter"/>
</dbReference>
<dbReference type="GO" id="GO:0030687">
    <property type="term" value="C:preribosome, large subunit precursor"/>
    <property type="evidence" value="ECO:0007669"/>
    <property type="project" value="UniProtKB-UniRule"/>
</dbReference>
<dbReference type="GO" id="GO:0043021">
    <property type="term" value="F:ribonucleoprotein complex binding"/>
    <property type="evidence" value="ECO:0007669"/>
    <property type="project" value="UniProtKB-UniRule"/>
</dbReference>
<dbReference type="GO" id="GO:0000466">
    <property type="term" value="P:maturation of 5.8S rRNA from tricistronic rRNA transcript (SSU-rRNA, 5.8S rRNA, LSU-rRNA)"/>
    <property type="evidence" value="ECO:0007669"/>
    <property type="project" value="UniProtKB-UniRule"/>
</dbReference>
<dbReference type="GO" id="GO:0000463">
    <property type="term" value="P:maturation of LSU-rRNA from tricistronic rRNA transcript (SSU-rRNA, 5.8S rRNA, LSU-rRNA)"/>
    <property type="evidence" value="ECO:0007669"/>
    <property type="project" value="UniProtKB-UniRule"/>
</dbReference>
<dbReference type="FunFam" id="2.130.10.10:FF:000576">
    <property type="entry name" value="Ribosome biogenesis protein ERB1"/>
    <property type="match status" value="1"/>
</dbReference>
<dbReference type="Gene3D" id="2.130.10.10">
    <property type="entry name" value="YVTN repeat-like/Quinoprotein amine dehydrogenase"/>
    <property type="match status" value="1"/>
</dbReference>
<dbReference type="HAMAP" id="MF_03027">
    <property type="entry name" value="BOP1"/>
    <property type="match status" value="1"/>
</dbReference>
<dbReference type="InterPro" id="IPR028598">
    <property type="entry name" value="BOP1/Erb1"/>
</dbReference>
<dbReference type="InterPro" id="IPR012953">
    <property type="entry name" value="BOP1_N_dom"/>
</dbReference>
<dbReference type="InterPro" id="IPR015943">
    <property type="entry name" value="WD40/YVTN_repeat-like_dom_sf"/>
</dbReference>
<dbReference type="InterPro" id="IPR019775">
    <property type="entry name" value="WD40_repeat_CS"/>
</dbReference>
<dbReference type="InterPro" id="IPR036322">
    <property type="entry name" value="WD40_repeat_dom_sf"/>
</dbReference>
<dbReference type="InterPro" id="IPR001680">
    <property type="entry name" value="WD40_rpt"/>
</dbReference>
<dbReference type="PANTHER" id="PTHR17605:SF0">
    <property type="entry name" value="RIBOSOME BIOGENESIS PROTEIN BOP1"/>
    <property type="match status" value="1"/>
</dbReference>
<dbReference type="PANTHER" id="PTHR17605">
    <property type="entry name" value="RIBOSOME BIOGENESIS PROTEIN BOP1 BLOCK OF PROLIFERATION 1 PROTEIN"/>
    <property type="match status" value="1"/>
</dbReference>
<dbReference type="Pfam" id="PF08145">
    <property type="entry name" value="BOP1NT"/>
    <property type="match status" value="1"/>
</dbReference>
<dbReference type="Pfam" id="PF00400">
    <property type="entry name" value="WD40"/>
    <property type="match status" value="4"/>
</dbReference>
<dbReference type="SMART" id="SM01035">
    <property type="entry name" value="BOP1NT"/>
    <property type="match status" value="1"/>
</dbReference>
<dbReference type="SMART" id="SM00320">
    <property type="entry name" value="WD40"/>
    <property type="match status" value="6"/>
</dbReference>
<dbReference type="SUPFAM" id="SSF50978">
    <property type="entry name" value="WD40 repeat-like"/>
    <property type="match status" value="1"/>
</dbReference>
<dbReference type="PROSITE" id="PS00678">
    <property type="entry name" value="WD_REPEATS_1"/>
    <property type="match status" value="1"/>
</dbReference>
<dbReference type="PROSITE" id="PS50082">
    <property type="entry name" value="WD_REPEATS_2"/>
    <property type="match status" value="3"/>
</dbReference>
<dbReference type="PROSITE" id="PS50294">
    <property type="entry name" value="WD_REPEATS_REGION"/>
    <property type="match status" value="2"/>
</dbReference>